<name>SHO1_LODEL</name>
<feature type="chain" id="PRO_0000410381" description="High osmolarity signaling protein SHO1">
    <location>
        <begin position="1"/>
        <end position="324"/>
    </location>
</feature>
<feature type="topological domain" description="Cytoplasmic" evidence="2">
    <location>
        <begin position="1"/>
        <end position="12"/>
    </location>
</feature>
<feature type="transmembrane region" description="Helical" evidence="2">
    <location>
        <begin position="13"/>
        <end position="33"/>
    </location>
</feature>
<feature type="topological domain" description="Extracellular" evidence="2">
    <location>
        <begin position="34"/>
        <end position="42"/>
    </location>
</feature>
<feature type="transmembrane region" description="Helical" evidence="2">
    <location>
        <begin position="43"/>
        <end position="63"/>
    </location>
</feature>
<feature type="topological domain" description="Cytoplasmic" evidence="2">
    <location>
        <begin position="64"/>
        <end position="65"/>
    </location>
</feature>
<feature type="transmembrane region" description="Helical" evidence="2">
    <location>
        <begin position="66"/>
        <end position="86"/>
    </location>
</feature>
<feature type="topological domain" description="Extracellular" evidence="2">
    <location>
        <begin position="87"/>
        <end position="101"/>
    </location>
</feature>
<feature type="transmembrane region" description="Helical" evidence="2">
    <location>
        <begin position="102"/>
        <end position="122"/>
    </location>
</feature>
<feature type="topological domain" description="Cytoplasmic" evidence="2">
    <location>
        <begin position="123"/>
        <end position="324"/>
    </location>
</feature>
<feature type="domain" description="SH3" evidence="3">
    <location>
        <begin position="263"/>
        <end position="324"/>
    </location>
</feature>
<feature type="region of interest" description="Disordered" evidence="4">
    <location>
        <begin position="183"/>
        <end position="204"/>
    </location>
</feature>
<feature type="region of interest" description="Disordered" evidence="4">
    <location>
        <begin position="223"/>
        <end position="254"/>
    </location>
</feature>
<feature type="compositionally biased region" description="Low complexity" evidence="4">
    <location>
        <begin position="185"/>
        <end position="204"/>
    </location>
</feature>
<feature type="compositionally biased region" description="Polar residues" evidence="4">
    <location>
        <begin position="236"/>
        <end position="254"/>
    </location>
</feature>
<feature type="glycosylation site" description="N-linked (GlcNAc...) asparagine" evidence="2">
    <location>
        <position position="87"/>
    </location>
</feature>
<feature type="glycosylation site" description="N-linked (GlcNAc...) asparagine" evidence="2">
    <location>
        <position position="95"/>
    </location>
</feature>
<organism>
    <name type="scientific">Lodderomyces elongisporus (strain ATCC 11503 / CBS 2605 / JCM 1781 / NBRC 1676 / NRRL YB-4239)</name>
    <name type="common">Yeast</name>
    <name type="synonym">Saccharomyces elongisporus</name>
    <dbReference type="NCBI Taxonomy" id="379508"/>
    <lineage>
        <taxon>Eukaryota</taxon>
        <taxon>Fungi</taxon>
        <taxon>Dikarya</taxon>
        <taxon>Ascomycota</taxon>
        <taxon>Saccharomycotina</taxon>
        <taxon>Pichiomycetes</taxon>
        <taxon>Debaryomycetaceae</taxon>
        <taxon>Candida/Lodderomyces clade</taxon>
        <taxon>Lodderomyces</taxon>
    </lineage>
</organism>
<sequence>MGFKIRNFTGDPFAIATVSFGLIAWIVALAGAAASSQGSFPHFTWWGIAYQIVIILVITVLYLNNNIELYKFTLVGLVSIGFIYTTNSTNNLVYNSSSSGNLCCAAGCILLSILNLIWILYFGGHPESPTNQFIDSFSSNKYANEYIGRSSVLKTEPFDDQQGFNSAASKRFTSTGISLPQENVSQMSQTNTHSQQQQHSTNAANASNATSYFPLTQLHGLENSSQDMMGSAPRDLTQNTNTNSSGTKRNTLYTDSEGGTGITFRYKAKALYSYDANPDDINEISFIKDEILDVDDVDGKWWQARRANGQVGICPSNYVKLIDT</sequence>
<accession>A5E1V8</accession>
<comment type="function">
    <text evidence="1">Plasma membrane osmosensor that activates the high osmolarity glycerol (HOG) MAPK signaling pathway in response to high osmolarity.</text>
</comment>
<comment type="subunit">
    <text evidence="1">Forms homooligomers.</text>
</comment>
<comment type="subcellular location">
    <subcellularLocation>
        <location evidence="1">Cell membrane</location>
        <topology evidence="1">Multi-pass membrane protein</topology>
    </subcellularLocation>
</comment>
<comment type="similarity">
    <text evidence="5">Belongs to the SHO1 family.</text>
</comment>
<reference key="1">
    <citation type="journal article" date="2009" name="Nature">
        <title>Evolution of pathogenicity and sexual reproduction in eight Candida genomes.</title>
        <authorList>
            <person name="Butler G."/>
            <person name="Rasmussen M.D."/>
            <person name="Lin M.F."/>
            <person name="Santos M.A.S."/>
            <person name="Sakthikumar S."/>
            <person name="Munro C.A."/>
            <person name="Rheinbay E."/>
            <person name="Grabherr M."/>
            <person name="Forche A."/>
            <person name="Reedy J.L."/>
            <person name="Agrafioti I."/>
            <person name="Arnaud M.B."/>
            <person name="Bates S."/>
            <person name="Brown A.J.P."/>
            <person name="Brunke S."/>
            <person name="Costanzo M.C."/>
            <person name="Fitzpatrick D.A."/>
            <person name="de Groot P.W.J."/>
            <person name="Harris D."/>
            <person name="Hoyer L.L."/>
            <person name="Hube B."/>
            <person name="Klis F.M."/>
            <person name="Kodira C."/>
            <person name="Lennard N."/>
            <person name="Logue M.E."/>
            <person name="Martin R."/>
            <person name="Neiman A.M."/>
            <person name="Nikolaou E."/>
            <person name="Quail M.A."/>
            <person name="Quinn J."/>
            <person name="Santos M.C."/>
            <person name="Schmitzberger F.F."/>
            <person name="Sherlock G."/>
            <person name="Shah P."/>
            <person name="Silverstein K.A.T."/>
            <person name="Skrzypek M.S."/>
            <person name="Soll D."/>
            <person name="Staggs R."/>
            <person name="Stansfield I."/>
            <person name="Stumpf M.P.H."/>
            <person name="Sudbery P.E."/>
            <person name="Srikantha T."/>
            <person name="Zeng Q."/>
            <person name="Berman J."/>
            <person name="Berriman M."/>
            <person name="Heitman J."/>
            <person name="Gow N.A.R."/>
            <person name="Lorenz M.C."/>
            <person name="Birren B.W."/>
            <person name="Kellis M."/>
            <person name="Cuomo C.A."/>
        </authorList>
    </citation>
    <scope>NUCLEOTIDE SEQUENCE [LARGE SCALE GENOMIC DNA]</scope>
    <source>
        <strain>ATCC 11503 / BCRC 21390 / CBS 2605 / JCM 1781 / NBRC 1676 / NRRL YB-4239</strain>
    </source>
</reference>
<protein>
    <recommendedName>
        <fullName>High osmolarity signaling protein SHO1</fullName>
    </recommendedName>
    <alternativeName>
        <fullName>Osmosensor SHO1</fullName>
    </alternativeName>
</protein>
<keyword id="KW-1003">Cell membrane</keyword>
<keyword id="KW-0325">Glycoprotein</keyword>
<keyword id="KW-0472">Membrane</keyword>
<keyword id="KW-1185">Reference proteome</keyword>
<keyword id="KW-0728">SH3 domain</keyword>
<keyword id="KW-0346">Stress response</keyword>
<keyword id="KW-0812">Transmembrane</keyword>
<keyword id="KW-1133">Transmembrane helix</keyword>
<dbReference type="EMBL" id="CH981527">
    <property type="protein sequence ID" value="EDK45416.1"/>
    <property type="molecule type" value="Genomic_DNA"/>
</dbReference>
<dbReference type="RefSeq" id="XP_001525667.1">
    <property type="nucleotide sequence ID" value="XM_001525617.1"/>
</dbReference>
<dbReference type="SMR" id="A5E1V8"/>
<dbReference type="FunCoup" id="A5E1V8">
    <property type="interactions" value="146"/>
</dbReference>
<dbReference type="STRING" id="379508.A5E1V8"/>
<dbReference type="GlyCosmos" id="A5E1V8">
    <property type="glycosylation" value="2 sites, No reported glycans"/>
</dbReference>
<dbReference type="GeneID" id="5232726"/>
<dbReference type="KEGG" id="lel:PVL30_003081"/>
<dbReference type="VEuPathDB" id="FungiDB:LELG_03595"/>
<dbReference type="eggNOG" id="ENOG502QW7A">
    <property type="taxonomic scope" value="Eukaryota"/>
</dbReference>
<dbReference type="HOGENOM" id="CLU_043316_1_0_1"/>
<dbReference type="InParanoid" id="A5E1V8"/>
<dbReference type="OMA" id="NIVWIFY"/>
<dbReference type="OrthoDB" id="5983572at2759"/>
<dbReference type="Proteomes" id="UP000001996">
    <property type="component" value="Unassembled WGS sequence"/>
</dbReference>
<dbReference type="GO" id="GO:0005886">
    <property type="term" value="C:plasma membrane"/>
    <property type="evidence" value="ECO:0007669"/>
    <property type="project" value="UniProtKB-SubCell"/>
</dbReference>
<dbReference type="GO" id="GO:0030447">
    <property type="term" value="P:filamentous growth"/>
    <property type="evidence" value="ECO:0007669"/>
    <property type="project" value="UniProtKB-ARBA"/>
</dbReference>
<dbReference type="GO" id="GO:0030833">
    <property type="term" value="P:regulation of actin filament polymerization"/>
    <property type="evidence" value="ECO:0007669"/>
    <property type="project" value="TreeGrafter"/>
</dbReference>
<dbReference type="CDD" id="cd11855">
    <property type="entry name" value="SH3_Sho1p"/>
    <property type="match status" value="1"/>
</dbReference>
<dbReference type="FunFam" id="2.30.30.40:FF:000213">
    <property type="entry name" value="High osmolarity signaling protein SHO1"/>
    <property type="match status" value="1"/>
</dbReference>
<dbReference type="Gene3D" id="2.30.30.40">
    <property type="entry name" value="SH3 Domains"/>
    <property type="match status" value="1"/>
</dbReference>
<dbReference type="InterPro" id="IPR036028">
    <property type="entry name" value="SH3-like_dom_sf"/>
</dbReference>
<dbReference type="InterPro" id="IPR001452">
    <property type="entry name" value="SH3_domain"/>
</dbReference>
<dbReference type="InterPro" id="IPR035522">
    <property type="entry name" value="Sho1_SH3"/>
</dbReference>
<dbReference type="PANTHER" id="PTHR15735">
    <property type="entry name" value="FCH AND DOUBLE SH3 DOMAINS PROTEIN"/>
    <property type="match status" value="1"/>
</dbReference>
<dbReference type="PANTHER" id="PTHR15735:SF20">
    <property type="entry name" value="HIGH OSMOLARITY SIGNALING PROTEIN SHO1"/>
    <property type="match status" value="1"/>
</dbReference>
<dbReference type="Pfam" id="PF00018">
    <property type="entry name" value="SH3_1"/>
    <property type="match status" value="1"/>
</dbReference>
<dbReference type="PRINTS" id="PR00452">
    <property type="entry name" value="SH3DOMAIN"/>
</dbReference>
<dbReference type="SMART" id="SM00326">
    <property type="entry name" value="SH3"/>
    <property type="match status" value="1"/>
</dbReference>
<dbReference type="SUPFAM" id="SSF50044">
    <property type="entry name" value="SH3-domain"/>
    <property type="match status" value="1"/>
</dbReference>
<dbReference type="PROSITE" id="PS50002">
    <property type="entry name" value="SH3"/>
    <property type="match status" value="1"/>
</dbReference>
<gene>
    <name type="primary">SHO1</name>
    <name type="ORF">LELG_03595</name>
</gene>
<proteinExistence type="inferred from homology"/>
<evidence type="ECO:0000250" key="1"/>
<evidence type="ECO:0000255" key="2"/>
<evidence type="ECO:0000255" key="3">
    <source>
        <dbReference type="PROSITE-ProRule" id="PRU00192"/>
    </source>
</evidence>
<evidence type="ECO:0000256" key="4">
    <source>
        <dbReference type="SAM" id="MobiDB-lite"/>
    </source>
</evidence>
<evidence type="ECO:0000305" key="5"/>